<organism>
    <name type="scientific">Sulfurovum sp. (strain NBC37-1)</name>
    <dbReference type="NCBI Taxonomy" id="387093"/>
    <lineage>
        <taxon>Bacteria</taxon>
        <taxon>Pseudomonadati</taxon>
        <taxon>Campylobacterota</taxon>
        <taxon>Epsilonproteobacteria</taxon>
        <taxon>Campylobacterales</taxon>
        <taxon>Sulfurovaceae</taxon>
        <taxon>Sulfurovum</taxon>
    </lineage>
</organism>
<evidence type="ECO:0000255" key="1">
    <source>
        <dbReference type="HAMAP-Rule" id="MF_01382"/>
    </source>
</evidence>
<evidence type="ECO:0000256" key="2">
    <source>
        <dbReference type="SAM" id="MobiDB-lite"/>
    </source>
</evidence>
<gene>
    <name evidence="1" type="primary">secA</name>
    <name type="ordered locus">SUN_1485</name>
</gene>
<name>SECA_SULNB</name>
<dbReference type="EC" id="7.4.2.8" evidence="1"/>
<dbReference type="EMBL" id="AP009179">
    <property type="protein sequence ID" value="BAF72436.1"/>
    <property type="molecule type" value="Genomic_DNA"/>
</dbReference>
<dbReference type="RefSeq" id="WP_012083238.1">
    <property type="nucleotide sequence ID" value="NC_009663.1"/>
</dbReference>
<dbReference type="SMR" id="A6QAC7"/>
<dbReference type="STRING" id="387093.SUN_1485"/>
<dbReference type="KEGG" id="sun:SUN_1485"/>
<dbReference type="eggNOG" id="COG0653">
    <property type="taxonomic scope" value="Bacteria"/>
</dbReference>
<dbReference type="HOGENOM" id="CLU_005314_3_0_7"/>
<dbReference type="OrthoDB" id="9805579at2"/>
<dbReference type="Proteomes" id="UP000006378">
    <property type="component" value="Chromosome"/>
</dbReference>
<dbReference type="GO" id="GO:0031522">
    <property type="term" value="C:cell envelope Sec protein transport complex"/>
    <property type="evidence" value="ECO:0007669"/>
    <property type="project" value="TreeGrafter"/>
</dbReference>
<dbReference type="GO" id="GO:0005829">
    <property type="term" value="C:cytosol"/>
    <property type="evidence" value="ECO:0007669"/>
    <property type="project" value="TreeGrafter"/>
</dbReference>
<dbReference type="GO" id="GO:0005886">
    <property type="term" value="C:plasma membrane"/>
    <property type="evidence" value="ECO:0007669"/>
    <property type="project" value="UniProtKB-SubCell"/>
</dbReference>
<dbReference type="GO" id="GO:0005524">
    <property type="term" value="F:ATP binding"/>
    <property type="evidence" value="ECO:0007669"/>
    <property type="project" value="UniProtKB-UniRule"/>
</dbReference>
<dbReference type="GO" id="GO:0046872">
    <property type="term" value="F:metal ion binding"/>
    <property type="evidence" value="ECO:0007669"/>
    <property type="project" value="UniProtKB-KW"/>
</dbReference>
<dbReference type="GO" id="GO:0008564">
    <property type="term" value="F:protein-exporting ATPase activity"/>
    <property type="evidence" value="ECO:0007669"/>
    <property type="project" value="UniProtKB-EC"/>
</dbReference>
<dbReference type="GO" id="GO:0065002">
    <property type="term" value="P:intracellular protein transmembrane transport"/>
    <property type="evidence" value="ECO:0007669"/>
    <property type="project" value="UniProtKB-UniRule"/>
</dbReference>
<dbReference type="GO" id="GO:0017038">
    <property type="term" value="P:protein import"/>
    <property type="evidence" value="ECO:0007669"/>
    <property type="project" value="InterPro"/>
</dbReference>
<dbReference type="GO" id="GO:0006605">
    <property type="term" value="P:protein targeting"/>
    <property type="evidence" value="ECO:0007669"/>
    <property type="project" value="UniProtKB-UniRule"/>
</dbReference>
<dbReference type="GO" id="GO:0043952">
    <property type="term" value="P:protein transport by the Sec complex"/>
    <property type="evidence" value="ECO:0007669"/>
    <property type="project" value="TreeGrafter"/>
</dbReference>
<dbReference type="CDD" id="cd17928">
    <property type="entry name" value="DEXDc_SecA"/>
    <property type="match status" value="1"/>
</dbReference>
<dbReference type="CDD" id="cd18803">
    <property type="entry name" value="SF2_C_secA"/>
    <property type="match status" value="1"/>
</dbReference>
<dbReference type="FunFam" id="3.40.50.300:FF:000429">
    <property type="entry name" value="Preprotein translocase subunit SecA"/>
    <property type="match status" value="1"/>
</dbReference>
<dbReference type="FunFam" id="3.90.1440.10:FF:000001">
    <property type="entry name" value="Preprotein translocase subunit SecA"/>
    <property type="match status" value="1"/>
</dbReference>
<dbReference type="Gene3D" id="1.10.3060.10">
    <property type="entry name" value="Helical scaffold and wing domains of SecA"/>
    <property type="match status" value="1"/>
</dbReference>
<dbReference type="Gene3D" id="3.40.50.300">
    <property type="entry name" value="P-loop containing nucleotide triphosphate hydrolases"/>
    <property type="match status" value="3"/>
</dbReference>
<dbReference type="Gene3D" id="3.90.1440.10">
    <property type="entry name" value="SecA, preprotein cross-linking domain"/>
    <property type="match status" value="1"/>
</dbReference>
<dbReference type="HAMAP" id="MF_01382">
    <property type="entry name" value="SecA"/>
    <property type="match status" value="1"/>
</dbReference>
<dbReference type="InterPro" id="IPR014001">
    <property type="entry name" value="Helicase_ATP-bd"/>
</dbReference>
<dbReference type="InterPro" id="IPR001650">
    <property type="entry name" value="Helicase_C-like"/>
</dbReference>
<dbReference type="InterPro" id="IPR027417">
    <property type="entry name" value="P-loop_NTPase"/>
</dbReference>
<dbReference type="InterPro" id="IPR004027">
    <property type="entry name" value="SEC_C_motif"/>
</dbReference>
<dbReference type="InterPro" id="IPR000185">
    <property type="entry name" value="SecA"/>
</dbReference>
<dbReference type="InterPro" id="IPR011115">
    <property type="entry name" value="SecA_DEAD"/>
</dbReference>
<dbReference type="InterPro" id="IPR014018">
    <property type="entry name" value="SecA_motor_DEAD"/>
</dbReference>
<dbReference type="InterPro" id="IPR011130">
    <property type="entry name" value="SecA_preprotein_X-link_dom"/>
</dbReference>
<dbReference type="InterPro" id="IPR044722">
    <property type="entry name" value="SecA_SF2_C"/>
</dbReference>
<dbReference type="InterPro" id="IPR011116">
    <property type="entry name" value="SecA_Wing/Scaffold"/>
</dbReference>
<dbReference type="InterPro" id="IPR036266">
    <property type="entry name" value="SecA_Wing/Scaffold_sf"/>
</dbReference>
<dbReference type="InterPro" id="IPR036670">
    <property type="entry name" value="SecA_X-link_sf"/>
</dbReference>
<dbReference type="NCBIfam" id="NF006630">
    <property type="entry name" value="PRK09200.1"/>
    <property type="match status" value="1"/>
</dbReference>
<dbReference type="NCBIfam" id="NF009538">
    <property type="entry name" value="PRK12904.1"/>
    <property type="match status" value="1"/>
</dbReference>
<dbReference type="NCBIfam" id="TIGR00963">
    <property type="entry name" value="secA"/>
    <property type="match status" value="1"/>
</dbReference>
<dbReference type="PANTHER" id="PTHR30612:SF0">
    <property type="entry name" value="CHLOROPLAST PROTEIN-TRANSPORTING ATPASE"/>
    <property type="match status" value="1"/>
</dbReference>
<dbReference type="PANTHER" id="PTHR30612">
    <property type="entry name" value="SECA INNER MEMBRANE COMPONENT OF SEC PROTEIN SECRETION SYSTEM"/>
    <property type="match status" value="1"/>
</dbReference>
<dbReference type="Pfam" id="PF21090">
    <property type="entry name" value="P-loop_SecA"/>
    <property type="match status" value="1"/>
</dbReference>
<dbReference type="Pfam" id="PF02810">
    <property type="entry name" value="SEC-C"/>
    <property type="match status" value="1"/>
</dbReference>
<dbReference type="Pfam" id="PF07517">
    <property type="entry name" value="SecA_DEAD"/>
    <property type="match status" value="1"/>
</dbReference>
<dbReference type="Pfam" id="PF01043">
    <property type="entry name" value="SecA_PP_bind"/>
    <property type="match status" value="1"/>
</dbReference>
<dbReference type="Pfam" id="PF07516">
    <property type="entry name" value="SecA_SW"/>
    <property type="match status" value="1"/>
</dbReference>
<dbReference type="PRINTS" id="PR00906">
    <property type="entry name" value="SECA"/>
</dbReference>
<dbReference type="SMART" id="SM00957">
    <property type="entry name" value="SecA_DEAD"/>
    <property type="match status" value="1"/>
</dbReference>
<dbReference type="SMART" id="SM00958">
    <property type="entry name" value="SecA_PP_bind"/>
    <property type="match status" value="1"/>
</dbReference>
<dbReference type="SUPFAM" id="SSF81886">
    <property type="entry name" value="Helical scaffold and wing domains of SecA"/>
    <property type="match status" value="1"/>
</dbReference>
<dbReference type="SUPFAM" id="SSF52540">
    <property type="entry name" value="P-loop containing nucleoside triphosphate hydrolases"/>
    <property type="match status" value="2"/>
</dbReference>
<dbReference type="SUPFAM" id="SSF81767">
    <property type="entry name" value="Pre-protein crosslinking domain of SecA"/>
    <property type="match status" value="1"/>
</dbReference>
<dbReference type="PROSITE" id="PS51196">
    <property type="entry name" value="SECA_MOTOR_DEAD"/>
    <property type="match status" value="1"/>
</dbReference>
<feature type="chain" id="PRO_0000321019" description="Protein translocase subunit SecA">
    <location>
        <begin position="1"/>
        <end position="879"/>
    </location>
</feature>
<feature type="region of interest" description="Disordered" evidence="2">
    <location>
        <begin position="834"/>
        <end position="879"/>
    </location>
</feature>
<feature type="binding site" evidence="1">
    <location>
        <position position="87"/>
    </location>
    <ligand>
        <name>ATP</name>
        <dbReference type="ChEBI" id="CHEBI:30616"/>
    </ligand>
</feature>
<feature type="binding site" evidence="1">
    <location>
        <begin position="105"/>
        <end position="109"/>
    </location>
    <ligand>
        <name>ATP</name>
        <dbReference type="ChEBI" id="CHEBI:30616"/>
    </ligand>
</feature>
<feature type="binding site" evidence="1">
    <location>
        <position position="509"/>
    </location>
    <ligand>
        <name>ATP</name>
        <dbReference type="ChEBI" id="CHEBI:30616"/>
    </ligand>
</feature>
<feature type="binding site" evidence="1">
    <location>
        <position position="856"/>
    </location>
    <ligand>
        <name>Zn(2+)</name>
        <dbReference type="ChEBI" id="CHEBI:29105"/>
    </ligand>
</feature>
<feature type="binding site" evidence="1">
    <location>
        <position position="858"/>
    </location>
    <ligand>
        <name>Zn(2+)</name>
        <dbReference type="ChEBI" id="CHEBI:29105"/>
    </ligand>
</feature>
<feature type="binding site" evidence="1">
    <location>
        <position position="867"/>
    </location>
    <ligand>
        <name>Zn(2+)</name>
        <dbReference type="ChEBI" id="CHEBI:29105"/>
    </ligand>
</feature>
<feature type="binding site" evidence="1">
    <location>
        <position position="868"/>
    </location>
    <ligand>
        <name>Zn(2+)</name>
        <dbReference type="ChEBI" id="CHEBI:29105"/>
    </ligand>
</feature>
<sequence length="879" mass="100136">MIKSVLKVFGTQNDRIVKSYMKRVSNINVLESTYEPMSDEELQVAFNALRESVKSGEKSMEDVLYDSFAITREASKRVLGLRHYDVQMVGGMVLHDGNIAEMKTGEGKTLVATLAVVLNAMTGKGVHVVTVNDYLAKRDSSEMGELYNFLGYSVGCITADIQDDAGRKAQYDADITYGTNNEYGFDYLRDNMKVRLEEKVQREHNYAIVDEVDSILIDEARTPLIISGPTQRDQNHYARADAIAKQMERGEKIETKPGEDEKTTGDFIVDEKNRTIVMTEQGLQKAQDLFEVDNLYSLENAVLSHHLDQALKAHNIFEKDVDYVVQDNEIIIVDEFTGRLSEGRRYSEGLHQALEAKEGVEIQEESQTLAEITYQNYFRLYNKLAGMTGTAQTEATEFSQIYGLDVISIPTNVPVERADRNDLIYNTEKEKLDAVVRKVKEYHSKGQPVLIGTASIEKSEMIHERLKKEKIPHNILNAKNHAQEAEIIKNAGQKGAVTVATNMAGRGVDIKIDDEVRSLGGLAILGTERHESRRIDNQLRGRSGRQGDLGESQFFLSLDDNLLRIFGGEKIRNIMNRLGVEEGEYIDSKIVTRSVEKAQKKVENQHYESRKHILEYDDVANHQRKAIYAFRNQLLDPEFDIDAKIKENRAEYVHHMLAEAEIFEGMPKEDFDIEKLAALIKEELRIEVDPQYFKDKETEELEAMITEMMENIYEEKMSQLEPAQRNEIERILYLQVLDPQWRDHLYEMDVLKTGIGLRGYNQKDPLTEYKQDSYKLFTDLVERIKLEAVKVLHLVQFDFTSPEEEEEAIEQIREELESEVADASLNQSFEEGVIAEDSEKLKPITGTKKPKRNDPCPCGSGKKYKNCCGQSGPKKGLLA</sequence>
<comment type="function">
    <text evidence="1">Part of the Sec protein translocase complex. Interacts with the SecYEG preprotein conducting channel. Has a central role in coupling the hydrolysis of ATP to the transfer of proteins into and across the cell membrane, serving as an ATP-driven molecular motor driving the stepwise translocation of polypeptide chains across the membrane.</text>
</comment>
<comment type="catalytic activity">
    <reaction evidence="1">
        <text>ATP + H2O + cellular proteinSide 1 = ADP + phosphate + cellular proteinSide 2.</text>
        <dbReference type="EC" id="7.4.2.8"/>
    </reaction>
</comment>
<comment type="cofactor">
    <cofactor evidence="1">
        <name>Zn(2+)</name>
        <dbReference type="ChEBI" id="CHEBI:29105"/>
    </cofactor>
    <text evidence="1">May bind 1 zinc ion per subunit.</text>
</comment>
<comment type="subunit">
    <text evidence="1">Monomer and homodimer. Part of the essential Sec protein translocation apparatus which comprises SecA, SecYEG and auxiliary proteins SecDF-YajC and YidC.</text>
</comment>
<comment type="subcellular location">
    <subcellularLocation>
        <location evidence="1">Cell inner membrane</location>
        <topology evidence="1">Peripheral membrane protein</topology>
        <orientation evidence="1">Cytoplasmic side</orientation>
    </subcellularLocation>
    <subcellularLocation>
        <location evidence="1">Cytoplasm</location>
    </subcellularLocation>
    <text evidence="1">Distribution is 50-50.</text>
</comment>
<comment type="similarity">
    <text evidence="1">Belongs to the SecA family.</text>
</comment>
<proteinExistence type="inferred from homology"/>
<accession>A6QAC7</accession>
<reference key="1">
    <citation type="journal article" date="2007" name="Proc. Natl. Acad. Sci. U.S.A.">
        <title>Deep-sea vent epsilon-proteobacterial genomes provide insights into emergence of pathogens.</title>
        <authorList>
            <person name="Nakagawa S."/>
            <person name="Takaki Y."/>
            <person name="Shimamura S."/>
            <person name="Reysenbach A.-L."/>
            <person name="Takai K."/>
            <person name="Horikoshi K."/>
        </authorList>
    </citation>
    <scope>NUCLEOTIDE SEQUENCE [LARGE SCALE GENOMIC DNA]</scope>
    <source>
        <strain>NBC37-1</strain>
    </source>
</reference>
<keyword id="KW-0067">ATP-binding</keyword>
<keyword id="KW-0997">Cell inner membrane</keyword>
<keyword id="KW-1003">Cell membrane</keyword>
<keyword id="KW-0963">Cytoplasm</keyword>
<keyword id="KW-0472">Membrane</keyword>
<keyword id="KW-0479">Metal-binding</keyword>
<keyword id="KW-0547">Nucleotide-binding</keyword>
<keyword id="KW-0653">Protein transport</keyword>
<keyword id="KW-1278">Translocase</keyword>
<keyword id="KW-0811">Translocation</keyword>
<keyword id="KW-0813">Transport</keyword>
<keyword id="KW-0862">Zinc</keyword>
<protein>
    <recommendedName>
        <fullName evidence="1">Protein translocase subunit SecA</fullName>
        <ecNumber evidence="1">7.4.2.8</ecNumber>
    </recommendedName>
</protein>